<accession>B5FPU1</accession>
<proteinExistence type="inferred from homology"/>
<dbReference type="EC" id="3.4.25.2" evidence="1"/>
<dbReference type="EMBL" id="CP001144">
    <property type="protein sequence ID" value="ACH74542.1"/>
    <property type="molecule type" value="Genomic_DNA"/>
</dbReference>
<dbReference type="RefSeq" id="WP_000208240.1">
    <property type="nucleotide sequence ID" value="NC_011205.1"/>
</dbReference>
<dbReference type="SMR" id="B5FPU1"/>
<dbReference type="MEROPS" id="T01.006"/>
<dbReference type="KEGG" id="sed:SeD_A4492"/>
<dbReference type="HOGENOM" id="CLU_093872_1_0_6"/>
<dbReference type="Proteomes" id="UP000008322">
    <property type="component" value="Chromosome"/>
</dbReference>
<dbReference type="GO" id="GO:0009376">
    <property type="term" value="C:HslUV protease complex"/>
    <property type="evidence" value="ECO:0007669"/>
    <property type="project" value="UniProtKB-UniRule"/>
</dbReference>
<dbReference type="GO" id="GO:0005839">
    <property type="term" value="C:proteasome core complex"/>
    <property type="evidence" value="ECO:0007669"/>
    <property type="project" value="InterPro"/>
</dbReference>
<dbReference type="GO" id="GO:0046872">
    <property type="term" value="F:metal ion binding"/>
    <property type="evidence" value="ECO:0007669"/>
    <property type="project" value="UniProtKB-KW"/>
</dbReference>
<dbReference type="GO" id="GO:0004298">
    <property type="term" value="F:threonine-type endopeptidase activity"/>
    <property type="evidence" value="ECO:0007669"/>
    <property type="project" value="UniProtKB-KW"/>
</dbReference>
<dbReference type="GO" id="GO:0051603">
    <property type="term" value="P:proteolysis involved in protein catabolic process"/>
    <property type="evidence" value="ECO:0007669"/>
    <property type="project" value="InterPro"/>
</dbReference>
<dbReference type="CDD" id="cd01913">
    <property type="entry name" value="protease_HslV"/>
    <property type="match status" value="1"/>
</dbReference>
<dbReference type="FunFam" id="3.60.20.10:FF:000002">
    <property type="entry name" value="ATP-dependent protease subunit HslV"/>
    <property type="match status" value="1"/>
</dbReference>
<dbReference type="Gene3D" id="3.60.20.10">
    <property type="entry name" value="Glutamine Phosphoribosylpyrophosphate, subunit 1, domain 1"/>
    <property type="match status" value="1"/>
</dbReference>
<dbReference type="HAMAP" id="MF_00248">
    <property type="entry name" value="HslV"/>
    <property type="match status" value="1"/>
</dbReference>
<dbReference type="InterPro" id="IPR022281">
    <property type="entry name" value="ATP-dep_Prtase_HsIV_su"/>
</dbReference>
<dbReference type="InterPro" id="IPR029055">
    <property type="entry name" value="Ntn_hydrolases_N"/>
</dbReference>
<dbReference type="InterPro" id="IPR001353">
    <property type="entry name" value="Proteasome_sua/b"/>
</dbReference>
<dbReference type="InterPro" id="IPR023333">
    <property type="entry name" value="Proteasome_suB-type"/>
</dbReference>
<dbReference type="NCBIfam" id="TIGR03692">
    <property type="entry name" value="ATP_dep_HslV"/>
    <property type="match status" value="1"/>
</dbReference>
<dbReference type="NCBIfam" id="NF003964">
    <property type="entry name" value="PRK05456.1"/>
    <property type="match status" value="1"/>
</dbReference>
<dbReference type="PANTHER" id="PTHR32194:SF0">
    <property type="entry name" value="ATP-DEPENDENT PROTEASE SUBUNIT HSLV"/>
    <property type="match status" value="1"/>
</dbReference>
<dbReference type="PANTHER" id="PTHR32194">
    <property type="entry name" value="METALLOPROTEASE TLDD"/>
    <property type="match status" value="1"/>
</dbReference>
<dbReference type="Pfam" id="PF00227">
    <property type="entry name" value="Proteasome"/>
    <property type="match status" value="1"/>
</dbReference>
<dbReference type="PIRSF" id="PIRSF039093">
    <property type="entry name" value="HslV"/>
    <property type="match status" value="1"/>
</dbReference>
<dbReference type="SUPFAM" id="SSF56235">
    <property type="entry name" value="N-terminal nucleophile aminohydrolases (Ntn hydrolases)"/>
    <property type="match status" value="1"/>
</dbReference>
<dbReference type="PROSITE" id="PS51476">
    <property type="entry name" value="PROTEASOME_BETA_2"/>
    <property type="match status" value="1"/>
</dbReference>
<evidence type="ECO:0000255" key="1">
    <source>
        <dbReference type="HAMAP-Rule" id="MF_00248"/>
    </source>
</evidence>
<name>HSLV_SALDC</name>
<protein>
    <recommendedName>
        <fullName evidence="1">ATP-dependent protease subunit HslV</fullName>
        <ecNumber evidence="1">3.4.25.2</ecNumber>
    </recommendedName>
    <alternativeName>
        <fullName evidence="1">Heat shock protein HslV</fullName>
    </alternativeName>
</protein>
<keyword id="KW-0021">Allosteric enzyme</keyword>
<keyword id="KW-0963">Cytoplasm</keyword>
<keyword id="KW-0378">Hydrolase</keyword>
<keyword id="KW-0479">Metal-binding</keyword>
<keyword id="KW-0645">Protease</keyword>
<keyword id="KW-0915">Sodium</keyword>
<keyword id="KW-0346">Stress response</keyword>
<keyword id="KW-0888">Threonine protease</keyword>
<feature type="chain" id="PRO_1000100909" description="ATP-dependent protease subunit HslV">
    <location>
        <begin position="1"/>
        <end position="176"/>
    </location>
</feature>
<feature type="active site" evidence="1">
    <location>
        <position position="2"/>
    </location>
</feature>
<feature type="binding site" evidence="1">
    <location>
        <position position="157"/>
    </location>
    <ligand>
        <name>Na(+)</name>
        <dbReference type="ChEBI" id="CHEBI:29101"/>
    </ligand>
</feature>
<feature type="binding site" evidence="1">
    <location>
        <position position="160"/>
    </location>
    <ligand>
        <name>Na(+)</name>
        <dbReference type="ChEBI" id="CHEBI:29101"/>
    </ligand>
</feature>
<feature type="binding site" evidence="1">
    <location>
        <position position="163"/>
    </location>
    <ligand>
        <name>Na(+)</name>
        <dbReference type="ChEBI" id="CHEBI:29101"/>
    </ligand>
</feature>
<comment type="function">
    <text evidence="1">Protease subunit of a proteasome-like degradation complex believed to be a general protein degrading machinery.</text>
</comment>
<comment type="catalytic activity">
    <reaction evidence="1">
        <text>ATP-dependent cleavage of peptide bonds with broad specificity.</text>
        <dbReference type="EC" id="3.4.25.2"/>
    </reaction>
</comment>
<comment type="activity regulation">
    <text evidence="1">Allosterically activated by HslU binding.</text>
</comment>
<comment type="subunit">
    <text evidence="1">A double ring-shaped homohexamer of HslV is capped on each side by a ring-shaped HslU homohexamer. The assembly of the HslU/HslV complex is dependent on binding of ATP.</text>
</comment>
<comment type="subcellular location">
    <subcellularLocation>
        <location evidence="1">Cytoplasm</location>
    </subcellularLocation>
</comment>
<comment type="induction">
    <text evidence="1">By heat shock.</text>
</comment>
<comment type="similarity">
    <text evidence="1">Belongs to the peptidase T1B family. HslV subfamily.</text>
</comment>
<reference key="1">
    <citation type="journal article" date="2011" name="J. Bacteriol.">
        <title>Comparative genomics of 28 Salmonella enterica isolates: evidence for CRISPR-mediated adaptive sublineage evolution.</title>
        <authorList>
            <person name="Fricke W.F."/>
            <person name="Mammel M.K."/>
            <person name="McDermott P.F."/>
            <person name="Tartera C."/>
            <person name="White D.G."/>
            <person name="Leclerc J.E."/>
            <person name="Ravel J."/>
            <person name="Cebula T.A."/>
        </authorList>
    </citation>
    <scope>NUCLEOTIDE SEQUENCE [LARGE SCALE GENOMIC DNA]</scope>
    <source>
        <strain>CT_02021853</strain>
    </source>
</reference>
<sequence length="176" mass="18985">MTTIVSVRRNGHVVIAGDGQATLGNTVMKGNVKKVRRLYNDKVIAGFAGGTADAFTLFELFERKLEMHQGHLVKAAVELAKDWRTDRMLRKLEALLAVADETASLIITGNGDVVQPENDLIAIGSGGPYAQAAARALLENTELGAREIAEKALDIAGDICIYTNHFHTIEELTAKA</sequence>
<organism>
    <name type="scientific">Salmonella dublin (strain CT_02021853)</name>
    <dbReference type="NCBI Taxonomy" id="439851"/>
    <lineage>
        <taxon>Bacteria</taxon>
        <taxon>Pseudomonadati</taxon>
        <taxon>Pseudomonadota</taxon>
        <taxon>Gammaproteobacteria</taxon>
        <taxon>Enterobacterales</taxon>
        <taxon>Enterobacteriaceae</taxon>
        <taxon>Salmonella</taxon>
    </lineage>
</organism>
<gene>
    <name evidence="1" type="primary">hslV</name>
    <name type="ordered locus">SeD_A4492</name>
</gene>